<name>ALG14_EREGS</name>
<accession>Q750Y9</accession>
<sequence length="224" mass="23809">MAWLAIVCLLAATTALCVRMAALAPGVYGPAVCGGRSGGGRGPPRHVMIFLGSGGHTGEMLRLLEVYGAALVAGATVRVGYTDEASAERGRQSAALRAARGVEYVPLLKAREVGAGAGAAVRSTVRAAAQAFSAVRRARRALHTGPHVVVLNGPGTSVVVLFWLRVLDLLSLRRTRVVYVESLARTESLSLSGRLAYPFADEFVVQWPDLAQRYRRARWFGALV</sequence>
<feature type="chain" id="PRO_0000123809" description="UDP-N-acetylglucosamine transferase subunit ALG14">
    <location>
        <begin position="1"/>
        <end position="224"/>
    </location>
</feature>
<feature type="topological domain" description="Lumenal" evidence="2">
    <location>
        <begin position="1"/>
        <end position="2"/>
    </location>
</feature>
<feature type="transmembrane region" description="Helical" evidence="3">
    <location>
        <begin position="3"/>
        <end position="23"/>
    </location>
</feature>
<feature type="topological domain" description="Cytoplasmic" evidence="2">
    <location>
        <begin position="24"/>
        <end position="224"/>
    </location>
</feature>
<dbReference type="EMBL" id="AE016820">
    <property type="protein sequence ID" value="AAS54289.1"/>
    <property type="molecule type" value="Genomic_DNA"/>
</dbReference>
<dbReference type="RefSeq" id="NP_986465.1">
    <property type="nucleotide sequence ID" value="NM_211527.1"/>
</dbReference>
<dbReference type="SMR" id="Q750Y9"/>
<dbReference type="FunCoup" id="Q750Y9">
    <property type="interactions" value="313"/>
</dbReference>
<dbReference type="STRING" id="284811.Q750Y9"/>
<dbReference type="EnsemblFungi" id="AAS54289">
    <property type="protein sequence ID" value="AAS54289"/>
    <property type="gene ID" value="AGOS_AGL202W"/>
</dbReference>
<dbReference type="GeneID" id="4622758"/>
<dbReference type="KEGG" id="ago:AGOS_AGL202W"/>
<dbReference type="eggNOG" id="KOG3339">
    <property type="taxonomic scope" value="Eukaryota"/>
</dbReference>
<dbReference type="HOGENOM" id="CLU_064541_0_1_1"/>
<dbReference type="InParanoid" id="Q750Y9"/>
<dbReference type="OMA" id="GTCCIIT"/>
<dbReference type="OrthoDB" id="17098at2759"/>
<dbReference type="Proteomes" id="UP000000591">
    <property type="component" value="Chromosome VII"/>
</dbReference>
<dbReference type="GO" id="GO:0098548">
    <property type="term" value="C:cytoplasmic side of Golgi membrane"/>
    <property type="evidence" value="ECO:0007669"/>
    <property type="project" value="EnsemblFungi"/>
</dbReference>
<dbReference type="GO" id="GO:0005811">
    <property type="term" value="C:lipid droplet"/>
    <property type="evidence" value="ECO:0007669"/>
    <property type="project" value="EnsemblFungi"/>
</dbReference>
<dbReference type="GO" id="GO:0031965">
    <property type="term" value="C:nuclear membrane"/>
    <property type="evidence" value="ECO:0007669"/>
    <property type="project" value="UniProtKB-SubCell"/>
</dbReference>
<dbReference type="GO" id="GO:0043541">
    <property type="term" value="C:UDP-N-acetylglucosamine transferase complex"/>
    <property type="evidence" value="ECO:0000318"/>
    <property type="project" value="GO_Central"/>
</dbReference>
<dbReference type="GO" id="GO:0004577">
    <property type="term" value="F:N-acetylglucosaminyldiphosphodolichol N-acetylglucosaminyltransferase activity"/>
    <property type="evidence" value="ECO:0007669"/>
    <property type="project" value="EnsemblFungi"/>
</dbReference>
<dbReference type="GO" id="GO:0043495">
    <property type="term" value="F:protein-membrane adaptor activity"/>
    <property type="evidence" value="ECO:0007669"/>
    <property type="project" value="EnsemblFungi"/>
</dbReference>
<dbReference type="GO" id="GO:0006488">
    <property type="term" value="P:dolichol-linked oligosaccharide biosynthetic process"/>
    <property type="evidence" value="ECO:0000318"/>
    <property type="project" value="GO_Central"/>
</dbReference>
<dbReference type="FunFam" id="3.40.50.2000:FF:000758">
    <property type="entry name" value="UDP-N-acetylglucosamine transferase subunit ALG14"/>
    <property type="match status" value="1"/>
</dbReference>
<dbReference type="Gene3D" id="3.40.50.2000">
    <property type="entry name" value="Glycogen Phosphorylase B"/>
    <property type="match status" value="1"/>
</dbReference>
<dbReference type="InterPro" id="IPR013969">
    <property type="entry name" value="Oligosacch_biosynth_Alg14"/>
</dbReference>
<dbReference type="PANTHER" id="PTHR12154">
    <property type="entry name" value="GLYCOSYL TRANSFERASE-RELATED"/>
    <property type="match status" value="1"/>
</dbReference>
<dbReference type="PANTHER" id="PTHR12154:SF4">
    <property type="entry name" value="UDP-N-ACETYLGLUCOSAMINE TRANSFERASE SUBUNIT ALG14 HOMOLOG"/>
    <property type="match status" value="1"/>
</dbReference>
<dbReference type="Pfam" id="PF08660">
    <property type="entry name" value="Alg14"/>
    <property type="match status" value="1"/>
</dbReference>
<comment type="function">
    <text evidence="1">Involved in protein N-glycosylation. Essential for the second step of the dolichol-linked oligosaccharide pathway. Anchors the catalytic subunit ALG13 to the ER (By similarity).</text>
</comment>
<comment type="subunit">
    <text evidence="1">Heterodimer with ALG13 to form a functional enzyme.</text>
</comment>
<comment type="subcellular location">
    <subcellularLocation>
        <location evidence="2">Endoplasmic reticulum membrane</location>
        <topology evidence="3">Single-pass membrane protein</topology>
    </subcellularLocation>
    <subcellularLocation>
        <location evidence="2">Nucleus membrane</location>
        <topology evidence="3">Single-pass membrane protein</topology>
    </subcellularLocation>
</comment>
<comment type="similarity">
    <text evidence="4">Belongs to the ALG14 family.</text>
</comment>
<gene>
    <name type="primary">ALG14</name>
    <name type="ordered locus">AGL202W</name>
</gene>
<organism>
    <name type="scientific">Eremothecium gossypii (strain ATCC 10895 / CBS 109.51 / FGSC 9923 / NRRL Y-1056)</name>
    <name type="common">Yeast</name>
    <name type="synonym">Ashbya gossypii</name>
    <dbReference type="NCBI Taxonomy" id="284811"/>
    <lineage>
        <taxon>Eukaryota</taxon>
        <taxon>Fungi</taxon>
        <taxon>Dikarya</taxon>
        <taxon>Ascomycota</taxon>
        <taxon>Saccharomycotina</taxon>
        <taxon>Saccharomycetes</taxon>
        <taxon>Saccharomycetales</taxon>
        <taxon>Saccharomycetaceae</taxon>
        <taxon>Eremothecium</taxon>
    </lineage>
</organism>
<evidence type="ECO:0000250" key="1"/>
<evidence type="ECO:0000250" key="2">
    <source>
        <dbReference type="UniProtKB" id="P38242"/>
    </source>
</evidence>
<evidence type="ECO:0000255" key="3"/>
<evidence type="ECO:0000305" key="4"/>
<keyword id="KW-0256">Endoplasmic reticulum</keyword>
<keyword id="KW-0472">Membrane</keyword>
<keyword id="KW-0539">Nucleus</keyword>
<keyword id="KW-1185">Reference proteome</keyword>
<keyword id="KW-0812">Transmembrane</keyword>
<keyword id="KW-1133">Transmembrane helix</keyword>
<reference key="1">
    <citation type="journal article" date="2004" name="Science">
        <title>The Ashbya gossypii genome as a tool for mapping the ancient Saccharomyces cerevisiae genome.</title>
        <authorList>
            <person name="Dietrich F.S."/>
            <person name="Voegeli S."/>
            <person name="Brachat S."/>
            <person name="Lerch A."/>
            <person name="Gates K."/>
            <person name="Steiner S."/>
            <person name="Mohr C."/>
            <person name="Poehlmann R."/>
            <person name="Luedi P."/>
            <person name="Choi S."/>
            <person name="Wing R.A."/>
            <person name="Flavier A."/>
            <person name="Gaffney T.D."/>
            <person name="Philippsen P."/>
        </authorList>
    </citation>
    <scope>NUCLEOTIDE SEQUENCE [LARGE SCALE GENOMIC DNA]</scope>
    <source>
        <strain>ATCC 10895 / CBS 109.51 / FGSC 9923 / NRRL Y-1056</strain>
    </source>
</reference>
<reference key="2">
    <citation type="journal article" date="2013" name="G3 (Bethesda)">
        <title>Genomes of Ashbya fungi isolated from insects reveal four mating-type loci, numerous translocations, lack of transposons, and distinct gene duplications.</title>
        <authorList>
            <person name="Dietrich F.S."/>
            <person name="Voegeli S."/>
            <person name="Kuo S."/>
            <person name="Philippsen P."/>
        </authorList>
    </citation>
    <scope>GENOME REANNOTATION</scope>
    <source>
        <strain>ATCC 10895 / CBS 109.51 / FGSC 9923 / NRRL Y-1056</strain>
    </source>
</reference>
<proteinExistence type="inferred from homology"/>
<protein>
    <recommendedName>
        <fullName>UDP-N-acetylglucosamine transferase subunit ALG14</fullName>
    </recommendedName>
    <alternativeName>
        <fullName>Asparagine-linked glycosylation protein 14</fullName>
    </alternativeName>
</protein>